<organism>
    <name type="scientific">Photorhabdus laumondii subsp. laumondii (strain DSM 15139 / CIP 105565 / TT01)</name>
    <name type="common">Photorhabdus luminescens subsp. laumondii</name>
    <dbReference type="NCBI Taxonomy" id="243265"/>
    <lineage>
        <taxon>Bacteria</taxon>
        <taxon>Pseudomonadati</taxon>
        <taxon>Pseudomonadota</taxon>
        <taxon>Gammaproteobacteria</taxon>
        <taxon>Enterobacterales</taxon>
        <taxon>Morganellaceae</taxon>
        <taxon>Photorhabdus</taxon>
    </lineage>
</organism>
<keyword id="KW-0067">ATP-binding</keyword>
<keyword id="KW-0997">Cell inner membrane</keyword>
<keyword id="KW-1003">Cell membrane</keyword>
<keyword id="KW-0472">Membrane</keyword>
<keyword id="KW-0547">Nucleotide-binding</keyword>
<keyword id="KW-1185">Reference proteome</keyword>
<keyword id="KW-0762">Sugar transport</keyword>
<keyword id="KW-1278">Translocase</keyword>
<keyword id="KW-0813">Transport</keyword>
<name>MALK_PHOLL</name>
<gene>
    <name evidence="1" type="primary">malK</name>
    <name type="ordered locus">plu0457</name>
</gene>
<reference key="1">
    <citation type="journal article" date="2003" name="Nat. Biotechnol.">
        <title>The genome sequence of the entomopathogenic bacterium Photorhabdus luminescens.</title>
        <authorList>
            <person name="Duchaud E."/>
            <person name="Rusniok C."/>
            <person name="Frangeul L."/>
            <person name="Buchrieser C."/>
            <person name="Givaudan A."/>
            <person name="Taourit S."/>
            <person name="Bocs S."/>
            <person name="Boursaux-Eude C."/>
            <person name="Chandler M."/>
            <person name="Charles J.-F."/>
            <person name="Dassa E."/>
            <person name="Derose R."/>
            <person name="Derzelle S."/>
            <person name="Freyssinet G."/>
            <person name="Gaudriault S."/>
            <person name="Medigue C."/>
            <person name="Lanois A."/>
            <person name="Powell K."/>
            <person name="Siguier P."/>
            <person name="Vincent R."/>
            <person name="Wingate V."/>
            <person name="Zouine M."/>
            <person name="Glaser P."/>
            <person name="Boemare N."/>
            <person name="Danchin A."/>
            <person name="Kunst F."/>
        </authorList>
    </citation>
    <scope>NUCLEOTIDE SEQUENCE [LARGE SCALE GENOMIC DNA]</scope>
    <source>
        <strain>DSM 15139 / CIP 105565 / TT01</strain>
    </source>
</reference>
<evidence type="ECO:0000255" key="1">
    <source>
        <dbReference type="HAMAP-Rule" id="MF_01709"/>
    </source>
</evidence>
<accession>Q7N986</accession>
<protein>
    <recommendedName>
        <fullName evidence="1">Maltose/maltodextrin import ATP-binding protein MalK</fullName>
        <ecNumber evidence="1">7.5.2.1</ecNumber>
    </recommendedName>
</protein>
<feature type="chain" id="PRO_0000092479" description="Maltose/maltodextrin import ATP-binding protein MalK">
    <location>
        <begin position="1"/>
        <end position="369"/>
    </location>
</feature>
<feature type="domain" description="ABC transporter" evidence="1">
    <location>
        <begin position="4"/>
        <end position="234"/>
    </location>
</feature>
<feature type="binding site" evidence="1">
    <location>
        <begin position="36"/>
        <end position="43"/>
    </location>
    <ligand>
        <name>ATP</name>
        <dbReference type="ChEBI" id="CHEBI:30616"/>
    </ligand>
</feature>
<sequence>MSSVTLHNVSKAYGETIISKNINLEIQEGEFIVFVGPSGCGKSTILRMIAGLEDVTSGDLLINNIRMNDVPPAKRGVGMVFQSYALYPHLSVADNMSFGMKLAGAKKSDIQQRVKQIAEMLQLAHLLDRRPKALSGGQRQRVAIGRTLVAEPSVFLLDEPLSNLDAALRVQMRIEISRLHKRLQRTMIYVTHDQVEAMTLADRIVVLDGGDVAQIGKPLELYHYPVNRFVASFIGSPKMNFLPVKVTATAIDQVQITLPNRQQIWLPVESKGVKVGSNVSLGIRPEHLLPSDIADVTLEGIVQVVEQLGNETQVHIEIPAIHQNLVYRQPDVVLVEEGSTFTIGLPPHRCHLFREDGTACQRLHEEPGV</sequence>
<proteinExistence type="inferred from homology"/>
<dbReference type="EC" id="7.5.2.1" evidence="1"/>
<dbReference type="EMBL" id="BX571860">
    <property type="protein sequence ID" value="CAE12752.1"/>
    <property type="molecule type" value="Genomic_DNA"/>
</dbReference>
<dbReference type="RefSeq" id="WP_011144843.1">
    <property type="nucleotide sequence ID" value="NC_005126.1"/>
</dbReference>
<dbReference type="SMR" id="Q7N986"/>
<dbReference type="STRING" id="243265.plu0457"/>
<dbReference type="GeneID" id="48846742"/>
<dbReference type="KEGG" id="plu:plu0457"/>
<dbReference type="eggNOG" id="COG3842">
    <property type="taxonomic scope" value="Bacteria"/>
</dbReference>
<dbReference type="HOGENOM" id="CLU_000604_1_1_6"/>
<dbReference type="OrthoDB" id="9802264at2"/>
<dbReference type="Proteomes" id="UP000002514">
    <property type="component" value="Chromosome"/>
</dbReference>
<dbReference type="GO" id="GO:0055052">
    <property type="term" value="C:ATP-binding cassette (ABC) transporter complex, substrate-binding subunit-containing"/>
    <property type="evidence" value="ECO:0007669"/>
    <property type="project" value="TreeGrafter"/>
</dbReference>
<dbReference type="GO" id="GO:1990060">
    <property type="term" value="C:maltose transport complex"/>
    <property type="evidence" value="ECO:0007669"/>
    <property type="project" value="TreeGrafter"/>
</dbReference>
<dbReference type="GO" id="GO:0015423">
    <property type="term" value="F:ABC-type maltose transporter activity"/>
    <property type="evidence" value="ECO:0007669"/>
    <property type="project" value="UniProtKB-EC"/>
</dbReference>
<dbReference type="GO" id="GO:0005524">
    <property type="term" value="F:ATP binding"/>
    <property type="evidence" value="ECO:0007669"/>
    <property type="project" value="UniProtKB-KW"/>
</dbReference>
<dbReference type="GO" id="GO:0016887">
    <property type="term" value="F:ATP hydrolysis activity"/>
    <property type="evidence" value="ECO:0007669"/>
    <property type="project" value="InterPro"/>
</dbReference>
<dbReference type="CDD" id="cd03301">
    <property type="entry name" value="ABC_MalK_N"/>
    <property type="match status" value="1"/>
</dbReference>
<dbReference type="FunFam" id="3.40.50.300:FF:000042">
    <property type="entry name" value="Maltose/maltodextrin ABC transporter, ATP-binding protein"/>
    <property type="match status" value="1"/>
</dbReference>
<dbReference type="FunFam" id="2.40.50.100:FF:000014">
    <property type="entry name" value="Maltose/maltodextrin import ATP-binding protein MalK"/>
    <property type="match status" value="1"/>
</dbReference>
<dbReference type="Gene3D" id="2.40.50.100">
    <property type="match status" value="1"/>
</dbReference>
<dbReference type="Gene3D" id="2.40.50.140">
    <property type="entry name" value="Nucleic acid-binding proteins"/>
    <property type="match status" value="1"/>
</dbReference>
<dbReference type="Gene3D" id="3.40.50.300">
    <property type="entry name" value="P-loop containing nucleotide triphosphate hydrolases"/>
    <property type="match status" value="1"/>
</dbReference>
<dbReference type="InterPro" id="IPR003593">
    <property type="entry name" value="AAA+_ATPase"/>
</dbReference>
<dbReference type="InterPro" id="IPR003439">
    <property type="entry name" value="ABC_transporter-like_ATP-bd"/>
</dbReference>
<dbReference type="InterPro" id="IPR017871">
    <property type="entry name" value="ABC_transporter-like_CS"/>
</dbReference>
<dbReference type="InterPro" id="IPR015855">
    <property type="entry name" value="ABC_transpr_MalK-like"/>
</dbReference>
<dbReference type="InterPro" id="IPR047641">
    <property type="entry name" value="ABC_transpr_MalK/UgpC-like"/>
</dbReference>
<dbReference type="InterPro" id="IPR008995">
    <property type="entry name" value="Mo/tungstate-bd_C_term_dom"/>
</dbReference>
<dbReference type="InterPro" id="IPR012340">
    <property type="entry name" value="NA-bd_OB-fold"/>
</dbReference>
<dbReference type="InterPro" id="IPR040582">
    <property type="entry name" value="OB_MalK-like"/>
</dbReference>
<dbReference type="InterPro" id="IPR027417">
    <property type="entry name" value="P-loop_NTPase"/>
</dbReference>
<dbReference type="NCBIfam" id="NF008233">
    <property type="entry name" value="PRK11000.1"/>
    <property type="match status" value="1"/>
</dbReference>
<dbReference type="NCBIfam" id="NF008653">
    <property type="entry name" value="PRK11650.1"/>
    <property type="match status" value="1"/>
</dbReference>
<dbReference type="PANTHER" id="PTHR43875">
    <property type="entry name" value="MALTODEXTRIN IMPORT ATP-BINDING PROTEIN MSMX"/>
    <property type="match status" value="1"/>
</dbReference>
<dbReference type="PANTHER" id="PTHR43875:SF3">
    <property type="entry name" value="MALTOSE_MALTODEXTRIN IMPORT ATP-BINDING PROTEIN MALK"/>
    <property type="match status" value="1"/>
</dbReference>
<dbReference type="Pfam" id="PF00005">
    <property type="entry name" value="ABC_tran"/>
    <property type="match status" value="1"/>
</dbReference>
<dbReference type="Pfam" id="PF17912">
    <property type="entry name" value="OB_MalK"/>
    <property type="match status" value="1"/>
</dbReference>
<dbReference type="SMART" id="SM00382">
    <property type="entry name" value="AAA"/>
    <property type="match status" value="1"/>
</dbReference>
<dbReference type="SUPFAM" id="SSF50331">
    <property type="entry name" value="MOP-like"/>
    <property type="match status" value="1"/>
</dbReference>
<dbReference type="SUPFAM" id="SSF52540">
    <property type="entry name" value="P-loop containing nucleoside triphosphate hydrolases"/>
    <property type="match status" value="1"/>
</dbReference>
<dbReference type="PROSITE" id="PS00211">
    <property type="entry name" value="ABC_TRANSPORTER_1"/>
    <property type="match status" value="1"/>
</dbReference>
<dbReference type="PROSITE" id="PS50893">
    <property type="entry name" value="ABC_TRANSPORTER_2"/>
    <property type="match status" value="1"/>
</dbReference>
<dbReference type="PROSITE" id="PS51245">
    <property type="entry name" value="MALK"/>
    <property type="match status" value="1"/>
</dbReference>
<comment type="function">
    <text evidence="1">Part of the ABC transporter complex MalEFGK involved in maltose/maltodextrin import. Responsible for energy coupling to the transport system.</text>
</comment>
<comment type="catalytic activity">
    <reaction evidence="1">
        <text>D-maltose(out) + ATP + H2O = D-maltose(in) + ADP + phosphate + H(+)</text>
        <dbReference type="Rhea" id="RHEA:22132"/>
        <dbReference type="ChEBI" id="CHEBI:15377"/>
        <dbReference type="ChEBI" id="CHEBI:15378"/>
        <dbReference type="ChEBI" id="CHEBI:17306"/>
        <dbReference type="ChEBI" id="CHEBI:30616"/>
        <dbReference type="ChEBI" id="CHEBI:43474"/>
        <dbReference type="ChEBI" id="CHEBI:456216"/>
        <dbReference type="EC" id="7.5.2.1"/>
    </reaction>
</comment>
<comment type="subunit">
    <text evidence="1">The complex is composed of two ATP-binding proteins (MalK), two transmembrane proteins (MalG and MalK) and a solute-binding protein (MalE).</text>
</comment>
<comment type="subcellular location">
    <subcellularLocation>
        <location evidence="1">Cell inner membrane</location>
        <topology evidence="1">Peripheral membrane protein</topology>
    </subcellularLocation>
</comment>
<comment type="similarity">
    <text evidence="1">Belongs to the ABC transporter superfamily. Maltooligosaccharide importer (TC 3.A.1.1.1) family.</text>
</comment>